<proteinExistence type="evidence at protein level"/>
<reference key="1">
    <citation type="journal article" date="1982" name="Nature">
        <title>Nucleotide sequence of gamma delta resolvase gene and demonstration that its gene product acts as a repressor of transcription.</title>
        <authorList>
            <person name="Reed R.R."/>
            <person name="Shibuya G.I."/>
            <person name="Steitz J.A."/>
        </authorList>
    </citation>
    <scope>NUCLEOTIDE SEQUENCE [GENOMIC DNA]</scope>
</reference>
<reference key="2">
    <citation type="journal article" date="1994" name="Jpn. J. Genet.">
        <title>Identification of the region that determines the specificity of binding of the transposases encoded by Tn3 and gamma delta to the terminal inverted repeat sequences.</title>
        <authorList>
            <person name="Maekawa T."/>
            <person name="Ohtsubo E."/>
        </authorList>
    </citation>
    <scope>NUCLEOTIDE SEQUENCE [GENOMIC DNA]</scope>
</reference>
<reference key="3">
    <citation type="journal article" date="1995" name="DNA Seq.">
        <title>Sequence of a transposon identified as Tn1000 (gamma delta).</title>
        <authorList>
            <person name="Broom J.E."/>
            <person name="Hill D.F."/>
            <person name="Hughes G."/>
            <person name="Jones W.A."/>
            <person name="McNaughton J.C."/>
            <person name="Stockwell P.A."/>
            <person name="Petersen G.B."/>
        </authorList>
    </citation>
    <scope>NUCLEOTIDE SEQUENCE [GENOMIC DNA]</scope>
</reference>
<reference key="4">
    <citation type="submission" date="2000-04" db="EMBL/GenBank/DDBJ databases">
        <title>Complete nucleotide sequence of the F plasmid: its implications for organization and diversification of plasmid genomes.</title>
        <authorList>
            <person name="Shimizu H."/>
            <person name="Saitoh Y."/>
            <person name="Suda Y."/>
            <person name="Uehara K."/>
            <person name="Sampei G."/>
            <person name="Mizobuchi K."/>
        </authorList>
    </citation>
    <scope>NUCLEOTIDE SEQUENCE [LARGE SCALE GENOMIC DNA]</scope>
    <source>
        <strain>K12 / CR63</strain>
        <plasmid>F</plasmid>
    </source>
</reference>
<reference key="5">
    <citation type="journal article" date="1984" name="Cold Spring Harb. Symp. Quant. Biol.">
        <title>Resolvase-mediated recombination intermediates contain a serine residue covalently linked to DNA.</title>
        <authorList>
            <person name="Reed R.R."/>
            <person name="Moser C.D."/>
        </authorList>
    </citation>
    <scope>ACTIVE SITE SER-10</scope>
</reference>
<reference key="6">
    <citation type="journal article" date="1984" name="Cell">
        <title>Mutants of the gamma delta resolvase: a genetic analysis of the recombination function.</title>
        <authorList>
            <person name="Newman B.J."/>
            <person name="Grindley N.D.F."/>
        </authorList>
    </citation>
    <scope>MUTAGENESIS</scope>
</reference>
<reference key="7">
    <citation type="journal article" date="1990" name="Cell">
        <title>The crystal structure of the catalytic domain of the site-specific recombination enzyme gamma delta resolvase at 2.7-A resolution.</title>
        <authorList>
            <person name="Sanderson M.R."/>
            <person name="Freemont P.S."/>
            <person name="Rice P.A."/>
            <person name="Goldman A."/>
            <person name="Hatfull G.F."/>
            <person name="Grindley N.D.F."/>
            <person name="Steitz T.A."/>
        </authorList>
    </citation>
    <scope>X-RAY CRYSTALLOGRAPHY (2.7 ANGSTROMS) OF 1-140</scope>
</reference>
<reference key="8">
    <citation type="journal article" date="1995" name="Cell">
        <title>Crystal structure of the site-specific recombinase gamma delta resolvase complexed with a 34 bp cleavage site.</title>
        <authorList>
            <person name="Yang W."/>
            <person name="Steitz T.A."/>
        </authorList>
    </citation>
    <scope>X-RAY CRYSTALLOGRAPHY (3.0 ANGSTROMS)</scope>
</reference>
<reference key="9">
    <citation type="journal article" date="1994" name="Protein Sci.">
        <title>Determination of the structure of the DNA binding domain of gamma delta resolvase in solution.</title>
        <authorList>
            <person name="Liu T."/>
            <person name="Derose E.F."/>
            <person name="Mullen G.P."/>
        </authorList>
    </citation>
    <scope>STRUCTURE BY NMR OF 141-183</scope>
</reference>
<dbReference type="EMBL" id="J01844">
    <property type="status" value="NOT_ANNOTATED_CDS"/>
    <property type="molecule type" value="Genomic_DNA"/>
</dbReference>
<dbReference type="EMBL" id="X60200">
    <property type="protein sequence ID" value="CAA42759.1"/>
    <property type="molecule type" value="Genomic_DNA"/>
</dbReference>
<dbReference type="EMBL" id="D16449">
    <property type="protein sequence ID" value="BAA03915.1"/>
    <property type="molecule type" value="Genomic_DNA"/>
</dbReference>
<dbReference type="EMBL" id="AP001918">
    <property type="protein sequence ID" value="BAA97879.1"/>
    <property type="molecule type" value="Genomic_DNA"/>
</dbReference>
<dbReference type="PIR" id="A03542">
    <property type="entry name" value="RPECTG"/>
</dbReference>
<dbReference type="RefSeq" id="NP_061388.1">
    <property type="nucleotide sequence ID" value="NC_002483.1"/>
</dbReference>
<dbReference type="RefSeq" id="WP_001235704.1">
    <property type="nucleotide sequence ID" value="NZ_JACEFS010000062.1"/>
</dbReference>
<dbReference type="PDB" id="1GDR">
    <property type="method" value="X-ray"/>
    <property type="resolution" value="3.50 A"/>
    <property type="chains" value="A=1-140"/>
</dbReference>
<dbReference type="PDB" id="1GDT">
    <property type="method" value="X-ray"/>
    <property type="resolution" value="3.00 A"/>
    <property type="chains" value="A/B=1-183"/>
</dbReference>
<dbReference type="PDB" id="1GHT">
    <property type="method" value="NMR"/>
    <property type="chains" value="A=1-105"/>
</dbReference>
<dbReference type="PDB" id="1HX7">
    <property type="method" value="NMR"/>
    <property type="chains" value="A=1-105"/>
</dbReference>
<dbReference type="PDB" id="1RES">
    <property type="method" value="NMR"/>
    <property type="chains" value="A=141-183"/>
</dbReference>
<dbReference type="PDB" id="1RET">
    <property type="method" value="NMR"/>
    <property type="chains" value="A=141-183"/>
</dbReference>
<dbReference type="PDB" id="1ZR2">
    <property type="method" value="X-ray"/>
    <property type="resolution" value="3.90 A"/>
    <property type="chains" value="A/B=1-183"/>
</dbReference>
<dbReference type="PDB" id="1ZR4">
    <property type="method" value="X-ray"/>
    <property type="resolution" value="3.40 A"/>
    <property type="chains" value="A/B/D/E=1-183"/>
</dbReference>
<dbReference type="PDB" id="2GM4">
    <property type="method" value="X-ray"/>
    <property type="resolution" value="3.50 A"/>
    <property type="chains" value="A/B=1-183"/>
</dbReference>
<dbReference type="PDB" id="2GM5">
    <property type="method" value="X-ray"/>
    <property type="resolution" value="2.10 A"/>
    <property type="chains" value="A/B/C/D=2-134"/>
</dbReference>
<dbReference type="PDB" id="2RSL">
    <property type="method" value="X-ray"/>
    <property type="resolution" value="2.30 A"/>
    <property type="chains" value="A/B/C=1-140"/>
</dbReference>
<dbReference type="PDBsum" id="1GDR"/>
<dbReference type="PDBsum" id="1GDT"/>
<dbReference type="PDBsum" id="1GHT"/>
<dbReference type="PDBsum" id="1HX7"/>
<dbReference type="PDBsum" id="1RES"/>
<dbReference type="PDBsum" id="1RET"/>
<dbReference type="PDBsum" id="1ZR2"/>
<dbReference type="PDBsum" id="1ZR4"/>
<dbReference type="PDBsum" id="2GM4"/>
<dbReference type="PDBsum" id="2GM5"/>
<dbReference type="PDBsum" id="2RSL"/>
<dbReference type="BMRB" id="P03012"/>
<dbReference type="SMR" id="P03012"/>
<dbReference type="DIP" id="DIP-61217N"/>
<dbReference type="KEGG" id="ecoc:C3026_24145"/>
<dbReference type="PATRIC" id="fig|83333.107.peg.594"/>
<dbReference type="OrthoDB" id="9797501at2"/>
<dbReference type="PhylomeDB" id="P03012"/>
<dbReference type="EvolutionaryTrace" id="P03012"/>
<dbReference type="PRO" id="PR:P03012"/>
<dbReference type="GO" id="GO:0003677">
    <property type="term" value="F:DNA binding"/>
    <property type="evidence" value="ECO:0007669"/>
    <property type="project" value="UniProtKB-KW"/>
</dbReference>
<dbReference type="GO" id="GO:0000150">
    <property type="term" value="F:DNA strand exchange activity"/>
    <property type="evidence" value="ECO:0007669"/>
    <property type="project" value="InterPro"/>
</dbReference>
<dbReference type="GO" id="GO:0015074">
    <property type="term" value="P:DNA integration"/>
    <property type="evidence" value="ECO:0007669"/>
    <property type="project" value="UniProtKB-KW"/>
</dbReference>
<dbReference type="CDD" id="cd03768">
    <property type="entry name" value="SR_ResInv"/>
    <property type="match status" value="1"/>
</dbReference>
<dbReference type="FunFam" id="3.40.50.1390:FF:000005">
    <property type="entry name" value="TnpR recombinase"/>
    <property type="match status" value="1"/>
</dbReference>
<dbReference type="Gene3D" id="6.10.250.10">
    <property type="match status" value="1"/>
</dbReference>
<dbReference type="Gene3D" id="1.10.10.60">
    <property type="entry name" value="Homeodomain-like"/>
    <property type="match status" value="1"/>
</dbReference>
<dbReference type="Gene3D" id="3.40.50.1390">
    <property type="entry name" value="Resolvase, N-terminal catalytic domain"/>
    <property type="match status" value="1"/>
</dbReference>
<dbReference type="InterPro" id="IPR009057">
    <property type="entry name" value="Homeodomain-like_sf"/>
</dbReference>
<dbReference type="InterPro" id="IPR006118">
    <property type="entry name" value="Recombinase_CS"/>
</dbReference>
<dbReference type="InterPro" id="IPR006119">
    <property type="entry name" value="Resolv_N"/>
</dbReference>
<dbReference type="InterPro" id="IPR036162">
    <property type="entry name" value="Resolvase-like_N_sf"/>
</dbReference>
<dbReference type="InterPro" id="IPR006120">
    <property type="entry name" value="Resolvase_HTH_dom"/>
</dbReference>
<dbReference type="InterPro" id="IPR050639">
    <property type="entry name" value="SSR_resolvase"/>
</dbReference>
<dbReference type="PANTHER" id="PTHR30461">
    <property type="entry name" value="DNA-INVERTASE FROM LAMBDOID PROPHAGE"/>
    <property type="match status" value="1"/>
</dbReference>
<dbReference type="PANTHER" id="PTHR30461:SF26">
    <property type="entry name" value="RESOLVASE HOMOLOG YNEB"/>
    <property type="match status" value="1"/>
</dbReference>
<dbReference type="Pfam" id="PF02796">
    <property type="entry name" value="HTH_7"/>
    <property type="match status" value="1"/>
</dbReference>
<dbReference type="Pfam" id="PF00239">
    <property type="entry name" value="Resolvase"/>
    <property type="match status" value="1"/>
</dbReference>
<dbReference type="SMART" id="SM00857">
    <property type="entry name" value="Resolvase"/>
    <property type="match status" value="1"/>
</dbReference>
<dbReference type="SUPFAM" id="SSF46689">
    <property type="entry name" value="Homeodomain-like"/>
    <property type="match status" value="1"/>
</dbReference>
<dbReference type="SUPFAM" id="SSF53041">
    <property type="entry name" value="Resolvase-like"/>
    <property type="match status" value="1"/>
</dbReference>
<dbReference type="PROSITE" id="PS00397">
    <property type="entry name" value="RECOMBINASES_1"/>
    <property type="match status" value="1"/>
</dbReference>
<dbReference type="PROSITE" id="PS00398">
    <property type="entry name" value="RECOMBINASES_2"/>
    <property type="match status" value="1"/>
</dbReference>
<dbReference type="PROSITE" id="PS51736">
    <property type="entry name" value="RECOMBINASES_3"/>
    <property type="match status" value="1"/>
</dbReference>
<protein>
    <recommendedName>
        <fullName>Transposon gamma-delta resolvase</fullName>
    </recommendedName>
    <alternativeName>
        <fullName>Transposon Tn1000 resolvase</fullName>
    </alternativeName>
</protein>
<feature type="chain" id="PRO_0000196367" description="Transposon gamma-delta resolvase">
    <location>
        <begin position="1"/>
        <end position="183"/>
    </location>
</feature>
<feature type="domain" description="Resolvase/invertase-type recombinase catalytic" evidence="2">
    <location>
        <begin position="2"/>
        <end position="137"/>
    </location>
</feature>
<feature type="DNA-binding region" description="H-T-H motif" evidence="1">
    <location>
        <begin position="161"/>
        <end position="180"/>
    </location>
</feature>
<feature type="active site" description="O-(5'-phospho-DNA)-serine intermediate" evidence="2 3">
    <location>
        <position position="10"/>
    </location>
</feature>
<feature type="strand" evidence="8">
    <location>
        <begin position="3"/>
        <end position="11"/>
    </location>
</feature>
<feature type="helix" evidence="8">
    <location>
        <begin position="13"/>
        <end position="25"/>
    </location>
</feature>
<feature type="helix" evidence="8">
    <location>
        <begin position="30"/>
        <end position="32"/>
    </location>
</feature>
<feature type="strand" evidence="8">
    <location>
        <begin position="33"/>
        <end position="37"/>
    </location>
</feature>
<feature type="strand" evidence="5">
    <location>
        <begin position="41"/>
        <end position="43"/>
    </location>
</feature>
<feature type="helix" evidence="8">
    <location>
        <begin position="46"/>
        <end position="54"/>
    </location>
</feature>
<feature type="strand" evidence="8">
    <location>
        <begin position="60"/>
        <end position="65"/>
    </location>
</feature>
<feature type="helix" evidence="8">
    <location>
        <begin position="66"/>
        <end position="68"/>
    </location>
</feature>
<feature type="strand" evidence="8">
    <location>
        <begin position="69"/>
        <end position="72"/>
    </location>
</feature>
<feature type="helix" evidence="8">
    <location>
        <begin position="73"/>
        <end position="85"/>
    </location>
</feature>
<feature type="strand" evidence="8">
    <location>
        <begin position="89"/>
        <end position="92"/>
    </location>
</feature>
<feature type="turn" evidence="8">
    <location>
        <begin position="93"/>
        <end position="96"/>
    </location>
</feature>
<feature type="helix" evidence="8">
    <location>
        <begin position="102"/>
        <end position="127"/>
    </location>
</feature>
<feature type="turn" evidence="7">
    <location>
        <begin position="135"/>
        <end position="137"/>
    </location>
</feature>
<feature type="strand" evidence="6">
    <location>
        <begin position="143"/>
        <end position="145"/>
    </location>
</feature>
<feature type="helix" evidence="5">
    <location>
        <begin position="148"/>
        <end position="156"/>
    </location>
</feature>
<feature type="helix" evidence="5">
    <location>
        <begin position="161"/>
        <end position="168"/>
    </location>
</feature>
<feature type="helix" evidence="5">
    <location>
        <begin position="172"/>
        <end position="180"/>
    </location>
</feature>
<organism>
    <name type="scientific">Escherichia coli (strain K12)</name>
    <dbReference type="NCBI Taxonomy" id="83333"/>
    <lineage>
        <taxon>Bacteria</taxon>
        <taxon>Pseudomonadati</taxon>
        <taxon>Pseudomonadota</taxon>
        <taxon>Gammaproteobacteria</taxon>
        <taxon>Enterobacterales</taxon>
        <taxon>Enterobacteriaceae</taxon>
        <taxon>Escherichia</taxon>
    </lineage>
</organism>
<accession>P03012</accession>
<name>TNR1_ECOLI</name>
<comment type="function">
    <text>This protein catalyzes the site-specific recombination of the transposon and also regulates its frequency of transposition.</text>
</comment>
<comment type="similarity">
    <text evidence="4">Belongs to the site-specific recombinase resolvase family.</text>
</comment>
<evidence type="ECO:0000255" key="1"/>
<evidence type="ECO:0000255" key="2">
    <source>
        <dbReference type="PROSITE-ProRule" id="PRU01072"/>
    </source>
</evidence>
<evidence type="ECO:0000269" key="3">
    <source>
    </source>
</evidence>
<evidence type="ECO:0000305" key="4"/>
<evidence type="ECO:0007829" key="5">
    <source>
        <dbReference type="PDB" id="1GDT"/>
    </source>
</evidence>
<evidence type="ECO:0007829" key="6">
    <source>
        <dbReference type="PDB" id="1RES"/>
    </source>
</evidence>
<evidence type="ECO:0007829" key="7">
    <source>
        <dbReference type="PDB" id="1ZR4"/>
    </source>
</evidence>
<evidence type="ECO:0007829" key="8">
    <source>
        <dbReference type="PDB" id="2GM5"/>
    </source>
</evidence>
<keyword id="KW-0002">3D-structure</keyword>
<keyword id="KW-0229">DNA integration</keyword>
<keyword id="KW-0233">DNA recombination</keyword>
<keyword id="KW-0238">DNA-binding</keyword>
<keyword id="KW-0614">Plasmid</keyword>
<keyword id="KW-0814">Transposable element</keyword>
<geneLocation type="plasmid">
    <name>F</name>
</geneLocation>
<sequence>MRLFGYARVSTSQQSLDIQVRALKDAGVKANRIFTDKASGSSSDRKGLDLLRMKVEEGDVILVKKLDRLGRDTADMIQLIKEFDAQGVSIRFIDDGISTDGEMGKMVVTILSAVAQAERQRILERTNEGRQEAMAKGVVFGRKRKIDRDAVLNMWQQGLGASHISKTMNIARSTVYKVINESN</sequence>
<gene>
    <name type="primary">tnpR</name>
    <name type="ordered locus">ECOK12F009</name>
</gene>